<proteinExistence type="evidence at protein level"/>
<accession>P92792</accession>
<organism>
    <name type="scientific">Solanum tuberosum</name>
    <name type="common">Potato</name>
    <dbReference type="NCBI Taxonomy" id="4113"/>
    <lineage>
        <taxon>Eukaryota</taxon>
        <taxon>Viridiplantae</taxon>
        <taxon>Streptophyta</taxon>
        <taxon>Embryophyta</taxon>
        <taxon>Tracheophyta</taxon>
        <taxon>Spermatophyta</taxon>
        <taxon>Magnoliopsida</taxon>
        <taxon>eudicotyledons</taxon>
        <taxon>Gunneridae</taxon>
        <taxon>Pentapetalae</taxon>
        <taxon>asterids</taxon>
        <taxon>lamiids</taxon>
        <taxon>Solanales</taxon>
        <taxon>Solanaceae</taxon>
        <taxon>Solanoideae</taxon>
        <taxon>Solaneae</taxon>
        <taxon>Solanum</taxon>
    </lineage>
</organism>
<gene>
    <name type="primary">TOM20</name>
</gene>
<feature type="chain" id="PRO_0000051547" description="Mitochondrial import receptor subunit TOM20">
    <location>
        <begin position="1"/>
        <end position="204"/>
    </location>
</feature>
<feature type="topological domain" description="Cytoplasmic" evidence="1">
    <location>
        <begin position="1"/>
        <end position="169"/>
    </location>
</feature>
<feature type="transmembrane region" description="Helical" evidence="1">
    <location>
        <begin position="170"/>
        <end position="190"/>
    </location>
</feature>
<feature type="topological domain" description="Mitochondrial intermembrane" evidence="1">
    <location>
        <begin position="191"/>
        <end position="204"/>
    </location>
</feature>
<feature type="repeat" description="TPR">
    <location>
        <begin position="86"/>
        <end position="119"/>
    </location>
</feature>
<feature type="region of interest" description="Disordered" evidence="2">
    <location>
        <begin position="144"/>
        <end position="164"/>
    </location>
</feature>
<sequence length="204" mass="22814">MEMQSEFDRLLFFEHARKSAETTYAQNPLDADNLTRWGGALLELSQFQPVAESKQMISDATSKLEEALTVNPEKHDALWCLGNAHTSHVFLTPDMDEAKVYFEKATQCFQQAFDADPSNDLYRKSLEVTAKAPELHMEIHRHGPMQQTMAAEPSTSTSTKSSKKTKSSDLKYDIFGWVILAVGIVAWVGFAKSNMPPPPPPPPQ</sequence>
<name>TOM20_SOLTU</name>
<evidence type="ECO:0000255" key="1"/>
<evidence type="ECO:0000256" key="2">
    <source>
        <dbReference type="SAM" id="MobiDB-lite"/>
    </source>
</evidence>
<evidence type="ECO:0000269" key="3">
    <source>
    </source>
</evidence>
<evidence type="ECO:0000305" key="4"/>
<dbReference type="EMBL" id="X92491">
    <property type="protein sequence ID" value="CAA63223.1"/>
    <property type="molecule type" value="mRNA"/>
</dbReference>
<dbReference type="PIR" id="T07679">
    <property type="entry name" value="T07679"/>
</dbReference>
<dbReference type="RefSeq" id="NP_001275135.1">
    <property type="nucleotide sequence ID" value="NM_001288206.1"/>
</dbReference>
<dbReference type="SMR" id="P92792"/>
<dbReference type="FunCoup" id="P92792">
    <property type="interactions" value="960"/>
</dbReference>
<dbReference type="STRING" id="4113.P92792"/>
<dbReference type="GeneID" id="102603648"/>
<dbReference type="KEGG" id="sot:102603648"/>
<dbReference type="InParanoid" id="P92792"/>
<dbReference type="OrthoDB" id="1056333at2759"/>
<dbReference type="Proteomes" id="UP000011115">
    <property type="component" value="Unassembled WGS sequence"/>
</dbReference>
<dbReference type="ExpressionAtlas" id="P92792">
    <property type="expression patterns" value="baseline"/>
</dbReference>
<dbReference type="GO" id="GO:0005742">
    <property type="term" value="C:mitochondrial outer membrane translocase complex"/>
    <property type="evidence" value="ECO:0007669"/>
    <property type="project" value="InterPro"/>
</dbReference>
<dbReference type="GO" id="GO:0045040">
    <property type="term" value="P:protein insertion into mitochondrial outer membrane"/>
    <property type="evidence" value="ECO:0007669"/>
    <property type="project" value="InterPro"/>
</dbReference>
<dbReference type="Gene3D" id="1.25.40.10">
    <property type="entry name" value="Tetratricopeptide repeat domain"/>
    <property type="match status" value="1"/>
</dbReference>
<dbReference type="InterPro" id="IPR010547">
    <property type="entry name" value="TOM20_imprt_rcpt"/>
</dbReference>
<dbReference type="InterPro" id="IPR011990">
    <property type="entry name" value="TPR-like_helical_dom_sf"/>
</dbReference>
<dbReference type="PANTHER" id="PTHR32409">
    <property type="entry name" value="MITOCHONDRIAL IMPORT RECEPTOR SUBUNIT TOM20-1-RELATED"/>
    <property type="match status" value="1"/>
</dbReference>
<dbReference type="PANTHER" id="PTHR32409:SF3">
    <property type="entry name" value="MITOCHONDRIAL IMPORT RECEPTOR SUBUNIT TOM20-1-RELATED"/>
    <property type="match status" value="1"/>
</dbReference>
<dbReference type="Pfam" id="PF06552">
    <property type="entry name" value="TOM20_plant"/>
    <property type="match status" value="1"/>
</dbReference>
<dbReference type="SUPFAM" id="SSF48452">
    <property type="entry name" value="TPR-like"/>
    <property type="match status" value="1"/>
</dbReference>
<protein>
    <recommendedName>
        <fullName>Mitochondrial import receptor subunit TOM20</fullName>
    </recommendedName>
    <alternativeName>
        <fullName>Translocase of outer membrane 20 kDa subunit</fullName>
    </alternativeName>
</protein>
<comment type="function">
    <text>Central component of the receptor complex responsible for the recognition and translocation of cytosolically synthesized mitochondrial preproteins. Together with TOM22 functions as the transit peptide receptor at the surface of the mitochondrion outer membrane and facilitates the movement of preproteins into the translocation pore.</text>
</comment>
<comment type="subunit">
    <text>Forms part of the preprotein translocase complex of the outer mitochondrial membrane (TOM complex).</text>
</comment>
<comment type="subcellular location">
    <subcellularLocation>
        <location evidence="3">Mitochondrion outer membrane</location>
        <topology evidence="3">Single-pass membrane protein</topology>
    </subcellularLocation>
</comment>
<comment type="PTM">
    <text>The N-terminus is blocked.</text>
</comment>
<comment type="miscellaneous">
    <text>In mammals and fungi, the transmembrane domain is located at the N-terminus while it is located at the C-terminus in plants. The overall orientation of the protein in the membrane is therefore inverted.</text>
</comment>
<comment type="similarity">
    <text evidence="4">Belongs to the Tom20 family.</text>
</comment>
<keyword id="KW-0903">Direct protein sequencing</keyword>
<keyword id="KW-0472">Membrane</keyword>
<keyword id="KW-0496">Mitochondrion</keyword>
<keyword id="KW-1000">Mitochondrion outer membrane</keyword>
<keyword id="KW-0653">Protein transport</keyword>
<keyword id="KW-1185">Reference proteome</keyword>
<keyword id="KW-0802">TPR repeat</keyword>
<keyword id="KW-0812">Transmembrane</keyword>
<keyword id="KW-1133">Transmembrane helix</keyword>
<keyword id="KW-0813">Transport</keyword>
<reference key="1">
    <citation type="journal article" date="1996" name="Plant J.">
        <title>A receptor for protein import into potato mitochondria.</title>
        <authorList>
            <person name="Heins L."/>
            <person name="Schmitz U.K."/>
        </authorList>
    </citation>
    <scope>NUCLEOTIDE SEQUENCE [MRNA]</scope>
    <scope>PROTEIN SEQUENCE OF 19-47 AND 55-63</scope>
    <scope>CHARACTERIZATION</scope>
    <scope>SUBCELLULAR LOCATION</scope>
    <source>
        <strain>cv. Desiree</strain>
        <tissue>Leaf</tissue>
    </source>
</reference>
<reference key="2">
    <citation type="journal article" date="1998" name="J. Biol. Chem.">
        <title>Unique composition of the preprotein translocase of the outer mitochondrial membrane from plants.</title>
        <authorList>
            <person name="Jaensch L."/>
            <person name="Kruft V."/>
            <person name="Schmitz U.K."/>
            <person name="Braun H.-P."/>
        </authorList>
    </citation>
    <scope>PROTEIN SEQUENCE OF 55-63</scope>
    <source>
        <tissue>Tuber</tissue>
    </source>
</reference>